<gene>
    <name evidence="1" type="primary">srmB</name>
    <name type="ordered locus">HI_0422</name>
</gene>
<comment type="function">
    <text evidence="1">DEAD-box RNA helicase involved in the assembly of the 50S ribosomal subunit at low temperature. Exhibits RNA-stimulated ATP hydrolysis and RNA unwinding activity.</text>
</comment>
<comment type="catalytic activity">
    <reaction evidence="1">
        <text>ATP + H2O = ADP + phosphate + H(+)</text>
        <dbReference type="Rhea" id="RHEA:13065"/>
        <dbReference type="ChEBI" id="CHEBI:15377"/>
        <dbReference type="ChEBI" id="CHEBI:15378"/>
        <dbReference type="ChEBI" id="CHEBI:30616"/>
        <dbReference type="ChEBI" id="CHEBI:43474"/>
        <dbReference type="ChEBI" id="CHEBI:456216"/>
        <dbReference type="EC" id="3.6.4.13"/>
    </reaction>
</comment>
<comment type="subunit">
    <text evidence="1">Interacts with the 50S ribosomal subunit.</text>
</comment>
<comment type="subcellular location">
    <subcellularLocation>
        <location evidence="1">Cytoplasm</location>
    </subcellularLocation>
</comment>
<comment type="similarity">
    <text evidence="1">Belongs to the DEAD box helicase family. SrmB subfamily.</text>
</comment>
<keyword id="KW-0067">ATP-binding</keyword>
<keyword id="KW-0963">Cytoplasm</keyword>
<keyword id="KW-0347">Helicase</keyword>
<keyword id="KW-0378">Hydrolase</keyword>
<keyword id="KW-0547">Nucleotide-binding</keyword>
<keyword id="KW-1185">Reference proteome</keyword>
<keyword id="KW-0690">Ribosome biogenesis</keyword>
<evidence type="ECO:0000255" key="1">
    <source>
        <dbReference type="HAMAP-Rule" id="MF_00967"/>
    </source>
</evidence>
<evidence type="ECO:0000256" key="2">
    <source>
        <dbReference type="SAM" id="MobiDB-lite"/>
    </source>
</evidence>
<organism>
    <name type="scientific">Haemophilus influenzae (strain ATCC 51907 / DSM 11121 / KW20 / Rd)</name>
    <dbReference type="NCBI Taxonomy" id="71421"/>
    <lineage>
        <taxon>Bacteria</taxon>
        <taxon>Pseudomonadati</taxon>
        <taxon>Pseudomonadota</taxon>
        <taxon>Gammaproteobacteria</taxon>
        <taxon>Pasteurellales</taxon>
        <taxon>Pasteurellaceae</taxon>
        <taxon>Haemophilus</taxon>
    </lineage>
</organism>
<feature type="chain" id="PRO_0000055110" description="ATP-dependent RNA helicase SrmB">
    <location>
        <begin position="1"/>
        <end position="439"/>
    </location>
</feature>
<feature type="domain" description="Helicase ATP-binding" evidence="1">
    <location>
        <begin position="35"/>
        <end position="209"/>
    </location>
</feature>
<feature type="domain" description="Helicase C-terminal" evidence="1">
    <location>
        <begin position="237"/>
        <end position="387"/>
    </location>
</feature>
<feature type="region of interest" description="Disordered" evidence="2">
    <location>
        <begin position="381"/>
        <end position="439"/>
    </location>
</feature>
<feature type="short sequence motif" description="Q motif">
    <location>
        <begin position="4"/>
        <end position="32"/>
    </location>
</feature>
<feature type="short sequence motif" description="DEAD box">
    <location>
        <begin position="157"/>
        <end position="160"/>
    </location>
</feature>
<feature type="compositionally biased region" description="Basic and acidic residues" evidence="2">
    <location>
        <begin position="381"/>
        <end position="393"/>
    </location>
</feature>
<feature type="compositionally biased region" description="Basic residues" evidence="2">
    <location>
        <begin position="394"/>
        <end position="403"/>
    </location>
</feature>
<feature type="compositionally biased region" description="Basic residues" evidence="2">
    <location>
        <begin position="412"/>
        <end position="439"/>
    </location>
</feature>
<feature type="binding site" evidence="1">
    <location>
        <begin position="48"/>
        <end position="55"/>
    </location>
    <ligand>
        <name>ATP</name>
        <dbReference type="ChEBI" id="CHEBI:30616"/>
    </ligand>
</feature>
<name>SRMB_HAEIN</name>
<proteinExistence type="inferred from homology"/>
<dbReference type="EC" id="3.6.4.13" evidence="1"/>
<dbReference type="EMBL" id="L42023">
    <property type="protein sequence ID" value="AAC22078.1"/>
    <property type="molecule type" value="Genomic_DNA"/>
</dbReference>
<dbReference type="PIR" id="H64066">
    <property type="entry name" value="H64066"/>
</dbReference>
<dbReference type="RefSeq" id="NP_438583.1">
    <property type="nucleotide sequence ID" value="NC_000907.1"/>
</dbReference>
<dbReference type="SMR" id="P44701"/>
<dbReference type="STRING" id="71421.HI_0422"/>
<dbReference type="EnsemblBacteria" id="AAC22078">
    <property type="protein sequence ID" value="AAC22078"/>
    <property type="gene ID" value="HI_0422"/>
</dbReference>
<dbReference type="KEGG" id="hin:HI_0422"/>
<dbReference type="PATRIC" id="fig|71421.8.peg.442"/>
<dbReference type="eggNOG" id="COG0513">
    <property type="taxonomic scope" value="Bacteria"/>
</dbReference>
<dbReference type="HOGENOM" id="CLU_003041_28_3_6"/>
<dbReference type="OrthoDB" id="9805696at2"/>
<dbReference type="PhylomeDB" id="P44701"/>
<dbReference type="BioCyc" id="HINF71421:G1GJ1-437-MONOMER"/>
<dbReference type="Proteomes" id="UP000000579">
    <property type="component" value="Chromosome"/>
</dbReference>
<dbReference type="GO" id="GO:0005829">
    <property type="term" value="C:cytosol"/>
    <property type="evidence" value="ECO:0000318"/>
    <property type="project" value="GO_Central"/>
</dbReference>
<dbReference type="GO" id="GO:0005524">
    <property type="term" value="F:ATP binding"/>
    <property type="evidence" value="ECO:0007669"/>
    <property type="project" value="UniProtKB-UniRule"/>
</dbReference>
<dbReference type="GO" id="GO:0016887">
    <property type="term" value="F:ATP hydrolysis activity"/>
    <property type="evidence" value="ECO:0007669"/>
    <property type="project" value="RHEA"/>
</dbReference>
<dbReference type="GO" id="GO:0003676">
    <property type="term" value="F:nucleic acid binding"/>
    <property type="evidence" value="ECO:0007669"/>
    <property type="project" value="InterPro"/>
</dbReference>
<dbReference type="GO" id="GO:0003724">
    <property type="term" value="F:RNA helicase activity"/>
    <property type="evidence" value="ECO:0000318"/>
    <property type="project" value="GO_Central"/>
</dbReference>
<dbReference type="GO" id="GO:0000027">
    <property type="term" value="P:ribosomal large subunit assembly"/>
    <property type="evidence" value="ECO:0007669"/>
    <property type="project" value="UniProtKB-UniRule"/>
</dbReference>
<dbReference type="CDD" id="cd00268">
    <property type="entry name" value="DEADc"/>
    <property type="match status" value="1"/>
</dbReference>
<dbReference type="CDD" id="cd18787">
    <property type="entry name" value="SF2_C_DEAD"/>
    <property type="match status" value="1"/>
</dbReference>
<dbReference type="FunFam" id="3.40.50.300:FF:000291">
    <property type="entry name" value="ATP-dependent RNA helicase SrmB"/>
    <property type="match status" value="1"/>
</dbReference>
<dbReference type="Gene3D" id="3.40.50.300">
    <property type="entry name" value="P-loop containing nucleotide triphosphate hydrolases"/>
    <property type="match status" value="2"/>
</dbReference>
<dbReference type="HAMAP" id="MF_00967">
    <property type="entry name" value="DEAD_helicase_SrmB"/>
    <property type="match status" value="1"/>
</dbReference>
<dbReference type="InterPro" id="IPR011545">
    <property type="entry name" value="DEAD/DEAH_box_helicase_dom"/>
</dbReference>
<dbReference type="InterPro" id="IPR050079">
    <property type="entry name" value="DEAD_box_RNA_helicase"/>
</dbReference>
<dbReference type="InterPro" id="IPR028621">
    <property type="entry name" value="DEAD_helicase_SrmB"/>
</dbReference>
<dbReference type="InterPro" id="IPR014001">
    <property type="entry name" value="Helicase_ATP-bd"/>
</dbReference>
<dbReference type="InterPro" id="IPR001650">
    <property type="entry name" value="Helicase_C-like"/>
</dbReference>
<dbReference type="InterPro" id="IPR027417">
    <property type="entry name" value="P-loop_NTPase"/>
</dbReference>
<dbReference type="InterPro" id="IPR000629">
    <property type="entry name" value="RNA-helicase_DEAD-box_CS"/>
</dbReference>
<dbReference type="InterPro" id="IPR014014">
    <property type="entry name" value="RNA_helicase_DEAD_Q_motif"/>
</dbReference>
<dbReference type="NCBIfam" id="NF008394">
    <property type="entry name" value="PRK11192.1"/>
    <property type="match status" value="1"/>
</dbReference>
<dbReference type="PANTHER" id="PTHR47959">
    <property type="entry name" value="ATP-DEPENDENT RNA HELICASE RHLE-RELATED"/>
    <property type="match status" value="1"/>
</dbReference>
<dbReference type="PANTHER" id="PTHR47959:SF3">
    <property type="entry name" value="ATP-DEPENDENT RNA HELICASE SRMB"/>
    <property type="match status" value="1"/>
</dbReference>
<dbReference type="Pfam" id="PF00270">
    <property type="entry name" value="DEAD"/>
    <property type="match status" value="1"/>
</dbReference>
<dbReference type="Pfam" id="PF00271">
    <property type="entry name" value="Helicase_C"/>
    <property type="match status" value="1"/>
</dbReference>
<dbReference type="SMART" id="SM00487">
    <property type="entry name" value="DEXDc"/>
    <property type="match status" value="1"/>
</dbReference>
<dbReference type="SMART" id="SM00490">
    <property type="entry name" value="HELICc"/>
    <property type="match status" value="1"/>
</dbReference>
<dbReference type="SUPFAM" id="SSF52540">
    <property type="entry name" value="P-loop containing nucleoside triphosphate hydrolases"/>
    <property type="match status" value="1"/>
</dbReference>
<dbReference type="PROSITE" id="PS00039">
    <property type="entry name" value="DEAD_ATP_HELICASE"/>
    <property type="match status" value="1"/>
</dbReference>
<dbReference type="PROSITE" id="PS51192">
    <property type="entry name" value="HELICASE_ATP_BIND_1"/>
    <property type="match status" value="1"/>
</dbReference>
<dbReference type="PROSITE" id="PS51194">
    <property type="entry name" value="HELICASE_CTER"/>
    <property type="match status" value="1"/>
</dbReference>
<dbReference type="PROSITE" id="PS51195">
    <property type="entry name" value="Q_MOTIF"/>
    <property type="match status" value="1"/>
</dbReference>
<sequence length="439" mass="49805">MNLSQFEQFDLSPELLKALEKKGYSRPTAIQMEAIPAAMEESDVLGSAPTGTGKTAAFLLPALQHLLDYPRRKPGPPRILVLTPTRELAMQVAEQAEELAQFTHLNIATITGGVAYQNHGDVFNTNQDLVVATPGRLLQYIKEENFDCRSVEMLIFDEADRMLQMGFGQDAEKIAAETRWRKQTLLFSATLEGELLVDFAERLLNDPVKVDAEPSRRERKKINQWYYHADSNEHKIKLLARFIETEEVTRGIVFIRRREDARELSETLRKRGIRSAYLEGEMAQTQRNNAIDKLKSGIVTVLVATDVAARGIDIDDVSHVMNFDLPYSADTYLHRIGRTARAGKKGTAVSFVEAHDYKLLGKIKRYTEEILKARILAGLEPRTKPPKDGEVKSVSKKQKARIKEKREEKKKTEAKKKVKLRHKDTKNIGKRRKPSNSNV</sequence>
<reference key="1">
    <citation type="journal article" date="1995" name="Science">
        <title>Whole-genome random sequencing and assembly of Haemophilus influenzae Rd.</title>
        <authorList>
            <person name="Fleischmann R.D."/>
            <person name="Adams M.D."/>
            <person name="White O."/>
            <person name="Clayton R.A."/>
            <person name="Kirkness E.F."/>
            <person name="Kerlavage A.R."/>
            <person name="Bult C.J."/>
            <person name="Tomb J.-F."/>
            <person name="Dougherty B.A."/>
            <person name="Merrick J.M."/>
            <person name="McKenney K."/>
            <person name="Sutton G.G."/>
            <person name="FitzHugh W."/>
            <person name="Fields C.A."/>
            <person name="Gocayne J.D."/>
            <person name="Scott J.D."/>
            <person name="Shirley R."/>
            <person name="Liu L.-I."/>
            <person name="Glodek A."/>
            <person name="Kelley J.M."/>
            <person name="Weidman J.F."/>
            <person name="Phillips C.A."/>
            <person name="Spriggs T."/>
            <person name="Hedblom E."/>
            <person name="Cotton M.D."/>
            <person name="Utterback T.R."/>
            <person name="Hanna M.C."/>
            <person name="Nguyen D.T."/>
            <person name="Saudek D.M."/>
            <person name="Brandon R.C."/>
            <person name="Fine L.D."/>
            <person name="Fritchman J.L."/>
            <person name="Fuhrmann J.L."/>
            <person name="Geoghagen N.S.M."/>
            <person name="Gnehm C.L."/>
            <person name="McDonald L.A."/>
            <person name="Small K.V."/>
            <person name="Fraser C.M."/>
            <person name="Smith H.O."/>
            <person name="Venter J.C."/>
        </authorList>
    </citation>
    <scope>NUCLEOTIDE SEQUENCE [LARGE SCALE GENOMIC DNA]</scope>
    <source>
        <strain>ATCC 51907 / DSM 11121 / KW20 / Rd</strain>
    </source>
</reference>
<protein>
    <recommendedName>
        <fullName evidence="1">ATP-dependent RNA helicase SrmB</fullName>
        <ecNumber evidence="1">3.6.4.13</ecNumber>
    </recommendedName>
</protein>
<accession>P44701</accession>